<organism>
    <name type="scientific">Limosilactobacillus reuteri</name>
    <name type="common">Lactobacillus reuteri</name>
    <dbReference type="NCBI Taxonomy" id="1598"/>
    <lineage>
        <taxon>Bacteria</taxon>
        <taxon>Bacillati</taxon>
        <taxon>Bacillota</taxon>
        <taxon>Bacilli</taxon>
        <taxon>Lactobacillales</taxon>
        <taxon>Lactobacillaceae</taxon>
        <taxon>Limosilactobacillus</taxon>
    </lineage>
</organism>
<gene>
    <name evidence="1" type="primary">frr</name>
</gene>
<evidence type="ECO:0000255" key="1">
    <source>
        <dbReference type="HAMAP-Rule" id="MF_00040"/>
    </source>
</evidence>
<accession>Q8VS52</accession>
<name>RRF_LIMRT</name>
<protein>
    <recommendedName>
        <fullName evidence="1">Ribosome-recycling factor</fullName>
        <shortName evidence="1">RRF</shortName>
    </recommendedName>
    <alternativeName>
        <fullName evidence="1">Ribosome-releasing factor</fullName>
    </alternativeName>
</protein>
<dbReference type="EMBL" id="AF401482">
    <property type="protein sequence ID" value="AAL60144.1"/>
    <property type="molecule type" value="Genomic_DNA"/>
</dbReference>
<dbReference type="SMR" id="Q8VS52"/>
<dbReference type="GO" id="GO:0005737">
    <property type="term" value="C:cytoplasm"/>
    <property type="evidence" value="ECO:0007669"/>
    <property type="project" value="UniProtKB-SubCell"/>
</dbReference>
<dbReference type="GO" id="GO:0043023">
    <property type="term" value="F:ribosomal large subunit binding"/>
    <property type="evidence" value="ECO:0007669"/>
    <property type="project" value="TreeGrafter"/>
</dbReference>
<dbReference type="GO" id="GO:0006415">
    <property type="term" value="P:translational termination"/>
    <property type="evidence" value="ECO:0007669"/>
    <property type="project" value="UniProtKB-UniRule"/>
</dbReference>
<dbReference type="CDD" id="cd00520">
    <property type="entry name" value="RRF"/>
    <property type="match status" value="1"/>
</dbReference>
<dbReference type="FunFam" id="1.10.132.20:FF:000001">
    <property type="entry name" value="Ribosome-recycling factor"/>
    <property type="match status" value="1"/>
</dbReference>
<dbReference type="FunFam" id="3.30.1360.40:FF:000001">
    <property type="entry name" value="Ribosome-recycling factor"/>
    <property type="match status" value="1"/>
</dbReference>
<dbReference type="Gene3D" id="3.30.1360.40">
    <property type="match status" value="1"/>
</dbReference>
<dbReference type="Gene3D" id="1.10.132.20">
    <property type="entry name" value="Ribosome-recycling factor"/>
    <property type="match status" value="1"/>
</dbReference>
<dbReference type="HAMAP" id="MF_00040">
    <property type="entry name" value="RRF"/>
    <property type="match status" value="1"/>
</dbReference>
<dbReference type="InterPro" id="IPR002661">
    <property type="entry name" value="Ribosome_recyc_fac"/>
</dbReference>
<dbReference type="InterPro" id="IPR023584">
    <property type="entry name" value="Ribosome_recyc_fac_dom"/>
</dbReference>
<dbReference type="InterPro" id="IPR036191">
    <property type="entry name" value="RRF_sf"/>
</dbReference>
<dbReference type="NCBIfam" id="TIGR00496">
    <property type="entry name" value="frr"/>
    <property type="match status" value="1"/>
</dbReference>
<dbReference type="PANTHER" id="PTHR20982:SF3">
    <property type="entry name" value="MITOCHONDRIAL RIBOSOME RECYCLING FACTOR PSEUDO 1"/>
    <property type="match status" value="1"/>
</dbReference>
<dbReference type="PANTHER" id="PTHR20982">
    <property type="entry name" value="RIBOSOME RECYCLING FACTOR"/>
    <property type="match status" value="1"/>
</dbReference>
<dbReference type="Pfam" id="PF01765">
    <property type="entry name" value="RRF"/>
    <property type="match status" value="1"/>
</dbReference>
<dbReference type="SUPFAM" id="SSF55194">
    <property type="entry name" value="Ribosome recycling factor, RRF"/>
    <property type="match status" value="1"/>
</dbReference>
<feature type="chain" id="PRO_0000167477" description="Ribosome-recycling factor">
    <location>
        <begin position="1"/>
        <end position="186"/>
    </location>
</feature>
<reference key="1">
    <citation type="submission" date="2001-07" db="EMBL/GenBank/DDBJ databases">
        <title>Cloning of UMP-kinase gene from Lactobacillus reuteri ATCC 557939.</title>
        <authorList>
            <person name="Nam S.J."/>
            <person name="Kim J.K."/>
            <person name="Park J.Y."/>
            <person name="Ha Y.L."/>
            <person name="Kim J.H."/>
        </authorList>
    </citation>
    <scope>NUCLEOTIDE SEQUENCE [GENOMIC DNA]</scope>
    <source>
        <strain>ATCC 55739 / PYR8</strain>
    </source>
</reference>
<comment type="function">
    <text evidence="1">Responsible for the release of ribosomes from messenger RNA at the termination of protein biosynthesis. May increase the efficiency of translation by recycling ribosomes from one round of translation to another.</text>
</comment>
<comment type="subcellular location">
    <subcellularLocation>
        <location evidence="1">Cytoplasm</location>
    </subcellularLocation>
</comment>
<comment type="similarity">
    <text evidence="1">Belongs to the RRF family.</text>
</comment>
<sequence length="186" mass="20576">MATGKQILNEAKDKMAKSGDALRRTLADIRAGRANASLLNGVKVDYYGAPTPLNQVASITIPEARQLLVTPYDESSLDNIEKAIYAANLGLTPQNDGSAIRILIPQLTEERRKELVKDVKAELEKAKVAVRNVRREAMDDLKKGNKDGDFNDDEFHDLEKKVQTETDNGIKNLENIAADKEKELMG</sequence>
<proteinExistence type="inferred from homology"/>
<keyword id="KW-0963">Cytoplasm</keyword>
<keyword id="KW-0648">Protein biosynthesis</keyword>